<feature type="chain" id="PRO_0000198036" description="Type I restriction enzyme EcoR124I/EcoR124II specificity subunit">
    <location>
        <begin position="1"/>
        <end position="404"/>
    </location>
</feature>
<feature type="region of interest" description="Target-recognition domain 1" evidence="7">
    <location>
        <begin position="1"/>
        <end position="153"/>
    </location>
</feature>
<feature type="region of interest" description="Conserved region 1" evidence="7">
    <location>
        <begin position="154"/>
        <end position="199"/>
    </location>
</feature>
<feature type="region of interest" description="Target-recognition domain 2" evidence="7">
    <location>
        <begin position="200"/>
        <end position="349"/>
    </location>
</feature>
<feature type="region of interest" description="Conserved region 2" evidence="7">
    <location>
        <begin position="350"/>
        <end position="404"/>
    </location>
</feature>
<feature type="mutagenesis site" description="Alters sequence specificity from 5'-GAAN(6)RTCG-3' to 5'-GAAN(7)RTCG-3'." evidence="2">
    <original>L</original>
    <variation>LTAEL</variation>
    <location>
        <position position="179"/>
    </location>
</feature>
<comment type="function">
    <text evidence="1 2 3 4 7">The specificity (S) subunit of a type I restriction enzyme; this subunit dictates DNA sequence specificity (PubMed:15300241, PubMed:2784505). The presence or absence of a 4-residue repeat changes the sequence specificity; a third copy of TAEL inserted at position 179-180 changes the recognition site from 5'-GAAN(6)RTCG-3' (for EcoR124I) to 5'-GAAN(7)RTCG-3' (for EcoR124II) (PubMed:2784505). The M and S subunits together form a methyltransferase (MTase) that methylates A-3 on the top and bottom strand of the sequence 5'-GAAN(7)RTCG-3'. In the presence of the R subunit the complex can also act as an endonuclease, binding to the same target sequence but cutting the DNA some distance from this site (PubMed:15300241). Whether the DNA is cut or modified depends on the methylation state of the target sequence. When the target site is unmodified, the DNA is cut. When the target site is hemimethylated, the complex acts as a maintenance MTase modifying the DNA so that both strands become methylated (PubMed:12654995, PubMed:32483229). After locating a non-methylated recognition site, the enzyme complex serves as a molecular motor that translocates DNA in an ATP-dependent manner until a collision occurs that triggers cleavage (Probable). The R(1)M(2)S(1) complex translocates an average of 555 bp/second on nicked DNA; the R(2)M(2)S(1) complex translocates at double that speed (PubMed:15300241). The 2 R subunit motors are independent and track along the helical pitch of the DNA, inducing positive supercoiling ahead of themselves (PubMed:15300241).</text>
</comment>
<comment type="subunit">
    <text evidence="3">The type I restriction/modification system is composed of three polypeptides R, M and S; the restriction enzyme has stoichiometry R(2)M(2)S(1) while the methyltransferase is M(2)S(1). There is an equilibrium between R(2)M(2)S(1) and R(1)M(2)S(1); the latter is methylation and translocation proficient but restriction deficient.</text>
</comment>
<comment type="subunit">
    <text evidence="3">(Microbial infection) Holoenenzyme interacts with Escherichia phage T7 protein Ocr; this interaction leads to the inhibition of the restriction activity, but may still allow methylation and translocation.</text>
</comment>
<comment type="domain">
    <text evidence="2 7">Contains two DNA recognition domains (TRD), each specifying recognition of one of the two defined components of the target sequence.</text>
</comment>
<comment type="miscellaneous">
    <text evidence="3">Type I restriction and modification enzymes are complex, multifunctional systems which require ATP, S-adenosyl methionine and Mg(2+) as cofactors and, in addition to their endonucleolytic and methylase activities, are potent DNA-dependent ATPases.</text>
</comment>
<comment type="miscellaneous">
    <text evidence="2">The presence or absence of a 4-amino acid repeat changes the sequence specificity; a third copy of TAEL inserted at position 179-180 changes the recognition site from 5'-GAAN(6)RTCG-3' (EcoR124I) to 5'-GAAN(7)RTCG-3' (EcoR124II). The shorter protein is also known as Type I specificity subunit S.EcoR124I.</text>
</comment>
<comment type="similarity">
    <text evidence="6">Belongs to the type-I restriction system S methylase family.</text>
</comment>
<evidence type="ECO:0000269" key="1">
    <source>
    </source>
</evidence>
<evidence type="ECO:0000269" key="2">
    <source>
    </source>
</evidence>
<evidence type="ECO:0000269" key="3">
    <source>
    </source>
</evidence>
<evidence type="ECO:0000303" key="4">
    <source>
    </source>
</evidence>
<evidence type="ECO:0000303" key="5">
    <source>
    </source>
</evidence>
<evidence type="ECO:0000305" key="6"/>
<evidence type="ECO:0000305" key="7">
    <source>
    </source>
</evidence>
<evidence type="ECO:0007744" key="8">
    <source>
        <dbReference type="PDB" id="7BST"/>
    </source>
</evidence>
<evidence type="ECO:0007744" key="9">
    <source>
        <dbReference type="PDB" id="7BTO"/>
    </source>
</evidence>
<evidence type="ECO:0007744" key="10">
    <source>
        <dbReference type="PDB" id="7BTP"/>
    </source>
</evidence>
<evidence type="ECO:0007744" key="11">
    <source>
        <dbReference type="PDB" id="7BTQ"/>
    </source>
</evidence>
<evidence type="ECO:0007744" key="12">
    <source>
        <dbReference type="PDB" id="7BTR"/>
    </source>
</evidence>
<keyword id="KW-0002">3D-structure</keyword>
<keyword id="KW-0238">DNA-binding</keyword>
<keyword id="KW-0614">Plasmid</keyword>
<keyword id="KW-0680">Restriction system</keyword>
<organism>
    <name type="scientific">Escherichia coli</name>
    <dbReference type="NCBI Taxonomy" id="562"/>
    <lineage>
        <taxon>Bacteria</taxon>
        <taxon>Pseudomonadati</taxon>
        <taxon>Pseudomonadota</taxon>
        <taxon>Gammaproteobacteria</taxon>
        <taxon>Enterobacterales</taxon>
        <taxon>Enterobacteriaceae</taxon>
        <taxon>Escherichia</taxon>
    </lineage>
</organism>
<geneLocation type="plasmid">
    <name>IncFIV R124/3</name>
</geneLocation>
<protein>
    <recommendedName>
        <fullName evidence="6">Type I restriction enzyme EcoR124I/EcoR124II specificity subunit</fullName>
        <shortName>S protein</shortName>
    </recommendedName>
    <alternativeName>
        <fullName evidence="5">Type I restriction enzyme EcoR124/EcoR124/3 specificity subunit</fullName>
    </alternativeName>
    <alternativeName>
        <fullName evidence="4">Type I specificity subunit S.EcoR124II</fullName>
        <shortName evidence="4">S.EcoR124II</shortName>
    </alternativeName>
    <alternativeName>
        <fullName>Type-1 restriction enzyme EcoR124I/EcoR124II specificity subunit</fullName>
    </alternativeName>
</protein>
<accession>P10485</accession>
<proteinExistence type="evidence at protein level"/>
<gene>
    <name type="primary">hsdS</name>
    <name type="synonym">hss</name>
</gene>
<name>T1S1_ECOLX</name>
<reference key="1">
    <citation type="journal article" date="1989" name="J. Mol. Biol.">
        <title>Basis for changes in DNA recognition by the EcoR124 and EcoR124/3 type I DNA restriction and modification enzymes.</title>
        <authorList>
            <person name="Price C."/>
            <person name="Lingner J."/>
            <person name="Bickle J."/>
            <person name="Firman T.A."/>
            <person name="Glover S.W."/>
        </authorList>
    </citation>
    <scope>NUCLEOTIDE SEQUENCE [GENOMIC DNA]</scope>
    <scope>DNA RECOGNITION SITE</scope>
    <scope>MUTAGENESIS OF LEU-179</scope>
    <source>
        <plasmid>IncFIV R124/3</plasmid>
    </source>
</reference>
<reference key="2">
    <citation type="submission" date="2005-11" db="EMBL/GenBank/DDBJ databases">
        <authorList>
            <person name="Blundell A."/>
        </authorList>
    </citation>
    <scope>SEQUENCE REVISION TO 179-180; 340-344 AND C-TERMINUS</scope>
</reference>
<reference key="3">
    <citation type="journal article" date="2004" name="Nat. Struct. Mol. Biol.">
        <title>Real-time observation of DNA translocation by the type I restriction modification enzyme EcoR124I.</title>
        <authorList>
            <person name="Seidel R."/>
            <person name="van Noort J."/>
            <person name="van der Scheer C."/>
            <person name="Bloom J.G."/>
            <person name="Dekker N.H."/>
            <person name="Dutta C.F."/>
            <person name="Blundell A."/>
            <person name="Robinson T."/>
            <person name="Firman K."/>
            <person name="Dekker C."/>
        </authorList>
    </citation>
    <scope>FUNCTION</scope>
    <scope>SUBUNIT</scope>
</reference>
<reference key="4">
    <citation type="journal article" date="2003" name="Nucleic Acids Res.">
        <title>A nomenclature for restriction enzymes, DNA methyltransferases, homing endonucleases and their genes.</title>
        <authorList>
            <person name="Roberts R.J."/>
            <person name="Belfort M."/>
            <person name="Bestor T."/>
            <person name="Bhagwat A.S."/>
            <person name="Bickle T.A."/>
            <person name="Bitinaite J."/>
            <person name="Blumenthal R.M."/>
            <person name="Degtyarev S.K."/>
            <person name="Dryden D.T."/>
            <person name="Dybvig K."/>
            <person name="Firman K."/>
            <person name="Gromova E.S."/>
            <person name="Gumport R.I."/>
            <person name="Halford S.E."/>
            <person name="Hattman S."/>
            <person name="Heitman J."/>
            <person name="Hornby D.P."/>
            <person name="Janulaitis A."/>
            <person name="Jeltsch A."/>
            <person name="Josephsen J."/>
            <person name="Kiss A."/>
            <person name="Klaenhammer T.R."/>
            <person name="Kobayashi I."/>
            <person name="Kong H."/>
            <person name="Krueger D.H."/>
            <person name="Lacks S."/>
            <person name="Marinus M.G."/>
            <person name="Miyahara M."/>
            <person name="Morgan R.D."/>
            <person name="Murray N.E."/>
            <person name="Nagaraja V."/>
            <person name="Piekarowicz A."/>
            <person name="Pingoud A."/>
            <person name="Raleigh E."/>
            <person name="Rao D.N."/>
            <person name="Reich N."/>
            <person name="Repin V.E."/>
            <person name="Selker E.U."/>
            <person name="Shaw P.C."/>
            <person name="Stein D.C."/>
            <person name="Stoddard B.L."/>
            <person name="Szybalski W."/>
            <person name="Trautner T.A."/>
            <person name="Van Etten J.L."/>
            <person name="Vitor J.M."/>
            <person name="Wilson G.G."/>
            <person name="Xu S.Y."/>
        </authorList>
    </citation>
    <scope>NOMENCLATURE</scope>
</reference>
<reference evidence="8 9 10 11 12" key="5">
    <citation type="journal article" date="2020" name="Nat. Microbiol.">
        <title>Structural insights into assembly, operation and inhibition of a type I restriction-modification system.</title>
        <authorList>
            <person name="Gao Y."/>
            <person name="Cao D."/>
            <person name="Zhu J."/>
            <person name="Feng H."/>
            <person name="Luo X."/>
            <person name="Liu S."/>
            <person name="Yan X.X."/>
            <person name="Zhang X."/>
            <person name="Gao P."/>
        </authorList>
    </citation>
    <scope>STRUCTURE BY ELECTRON MICROSCOPY (3.97 ANGSTROMS) OF 1-1032 IN COMPLEX WITH R AND S SUBUNITS AND WITH ESCHERICHIA PHAGE T7 PROTEIN OCR</scope>
    <scope>STRUCTURE BY ELECTRON MICROSCOPY (6.33 ANGSTROMS) IN COMPLEX WITH M SUBUNIT AND DNA</scope>
    <scope>FUNCTION</scope>
    <scope>INTERACTION WITH ESCHERICHIA PHAGE T7 PROTEIN OCR (MICROBIAL INFECTION)</scope>
    <scope>DOMAIN</scope>
    <scope>DNA-BINDING</scope>
</reference>
<dbReference type="EMBL" id="X13145">
    <property type="protein sequence ID" value="CAB37630.2"/>
    <property type="molecule type" value="Genomic_DNA"/>
</dbReference>
<dbReference type="PIR" id="S02167">
    <property type="entry name" value="S02167"/>
</dbReference>
<dbReference type="PDB" id="7BST">
    <property type="method" value="EM"/>
    <property type="resolution" value="4.37 A"/>
    <property type="chains" value="A=1-404"/>
</dbReference>
<dbReference type="PDB" id="7BTO">
    <property type="method" value="EM"/>
    <property type="resolution" value="3.97 A"/>
    <property type="chains" value="I=1-404"/>
</dbReference>
<dbReference type="PDB" id="7BTP">
    <property type="method" value="EM"/>
    <property type="resolution" value="4.01 A"/>
    <property type="chains" value="E=1-404"/>
</dbReference>
<dbReference type="PDB" id="7BTQ">
    <property type="method" value="EM"/>
    <property type="resolution" value="4.54 A"/>
    <property type="chains" value="E=1-404"/>
</dbReference>
<dbReference type="PDB" id="7BTR">
    <property type="method" value="EM"/>
    <property type="resolution" value="4.54 A"/>
    <property type="chains" value="E=1-404"/>
</dbReference>
<dbReference type="PDBsum" id="7BST"/>
<dbReference type="PDBsum" id="7BTO"/>
<dbReference type="PDBsum" id="7BTP"/>
<dbReference type="PDBsum" id="7BTQ"/>
<dbReference type="PDBsum" id="7BTR"/>
<dbReference type="EMDB" id="EMD-30166"/>
<dbReference type="EMDB" id="EMD-30180"/>
<dbReference type="EMDB" id="EMD-30181"/>
<dbReference type="EMDB" id="EMD-30182"/>
<dbReference type="EMDB" id="EMD-30183"/>
<dbReference type="SMR" id="P10485"/>
<dbReference type="DIP" id="DIP-17003N"/>
<dbReference type="REBASE" id="204160">
    <property type="entry name" value="S.Bli1441ORF2992P"/>
</dbReference>
<dbReference type="REBASE" id="204720">
    <property type="entry name" value="S.Bsu333ORF2986P"/>
</dbReference>
<dbReference type="REBASE" id="3648">
    <property type="entry name" value="S.EcoR124II"/>
</dbReference>
<dbReference type="PRO" id="PR:P10485"/>
<dbReference type="GO" id="GO:0003677">
    <property type="term" value="F:DNA binding"/>
    <property type="evidence" value="ECO:0007669"/>
    <property type="project" value="UniProtKB-KW"/>
</dbReference>
<dbReference type="GO" id="GO:0009307">
    <property type="term" value="P:DNA restriction-modification system"/>
    <property type="evidence" value="ECO:0007669"/>
    <property type="project" value="UniProtKB-KW"/>
</dbReference>
<dbReference type="CDD" id="cd17274">
    <property type="entry name" value="RMtype1_S_Eco540ANI-TRD1-CR1_like"/>
    <property type="match status" value="1"/>
</dbReference>
<dbReference type="CDD" id="cd17249">
    <property type="entry name" value="RMtype1_S_EcoR124I-TRD2-CR2_like"/>
    <property type="match status" value="1"/>
</dbReference>
<dbReference type="Gene3D" id="3.90.220.20">
    <property type="entry name" value="DNA methylase specificity domains"/>
    <property type="match status" value="2"/>
</dbReference>
<dbReference type="InterPro" id="IPR000055">
    <property type="entry name" value="Restrct_endonuc_typeI_TRD"/>
</dbReference>
<dbReference type="InterPro" id="IPR044946">
    <property type="entry name" value="Restrct_endonuc_typeI_TRD_sf"/>
</dbReference>
<dbReference type="InterPro" id="IPR051212">
    <property type="entry name" value="Type-I_RE_S_subunit"/>
</dbReference>
<dbReference type="PANTHER" id="PTHR43140:SF1">
    <property type="entry name" value="TYPE I RESTRICTION ENZYME ECOKI SPECIFICITY SUBUNIT"/>
    <property type="match status" value="1"/>
</dbReference>
<dbReference type="PANTHER" id="PTHR43140">
    <property type="entry name" value="TYPE-1 RESTRICTION ENZYME ECOKI SPECIFICITY PROTEIN"/>
    <property type="match status" value="1"/>
</dbReference>
<dbReference type="Pfam" id="PF01420">
    <property type="entry name" value="Methylase_S"/>
    <property type="match status" value="2"/>
</dbReference>
<dbReference type="SUPFAM" id="SSF116734">
    <property type="entry name" value="DNA methylase specificity domain"/>
    <property type="match status" value="2"/>
</dbReference>
<sequence length="404" mass="46179">MSEMSYLEKLLDGVEVEWLPLGEITKYEQPTKYLVKAKDYHDTYTIPVLTAGKTFILGYTNETHGIYQASKAPVIIFDDFTTANKWVDFDFKAKSSAMKMVTSCDDNKTLLKYVYYWLNTLPSEFAEGDHKRQWISNYSQKKIPIPCPDNPEKSLAIQSEIVRILDKFTALTAELTAELNMRKKQYNYYRDQLLSFKEGEVEWKTLGEIGKWYGGGTPSKNKIEFWENGSIPWISPKDMGRTLVDSSEDYITEEAVLHSSTKLIPANSIAIVVRSSILDKVLPSALIKVPATLNQDMKAVIPHENILVKYIYHMIGSRGSDILRAAKKTGGSVASIDSKKLFSFKIPVPNINEQQRIVEILDKFDTLTNSITEGLPREIELRQKQYEYYRDLLFSFPKPETVSN</sequence>